<reference key="1">
    <citation type="journal article" date="2002" name="Nature">
        <title>The genome sequence of Schizosaccharomyces pombe.</title>
        <authorList>
            <person name="Wood V."/>
            <person name="Gwilliam R."/>
            <person name="Rajandream M.A."/>
            <person name="Lyne M.H."/>
            <person name="Lyne R."/>
            <person name="Stewart A."/>
            <person name="Sgouros J.G."/>
            <person name="Peat N."/>
            <person name="Hayles J."/>
            <person name="Baker S.G."/>
            <person name="Basham D."/>
            <person name="Bowman S."/>
            <person name="Brooks K."/>
            <person name="Brown D."/>
            <person name="Brown S."/>
            <person name="Chillingworth T."/>
            <person name="Churcher C.M."/>
            <person name="Collins M."/>
            <person name="Connor R."/>
            <person name="Cronin A."/>
            <person name="Davis P."/>
            <person name="Feltwell T."/>
            <person name="Fraser A."/>
            <person name="Gentles S."/>
            <person name="Goble A."/>
            <person name="Hamlin N."/>
            <person name="Harris D.E."/>
            <person name="Hidalgo J."/>
            <person name="Hodgson G."/>
            <person name="Holroyd S."/>
            <person name="Hornsby T."/>
            <person name="Howarth S."/>
            <person name="Huckle E.J."/>
            <person name="Hunt S."/>
            <person name="Jagels K."/>
            <person name="James K.D."/>
            <person name="Jones L."/>
            <person name="Jones M."/>
            <person name="Leather S."/>
            <person name="McDonald S."/>
            <person name="McLean J."/>
            <person name="Mooney P."/>
            <person name="Moule S."/>
            <person name="Mungall K.L."/>
            <person name="Murphy L.D."/>
            <person name="Niblett D."/>
            <person name="Odell C."/>
            <person name="Oliver K."/>
            <person name="O'Neil S."/>
            <person name="Pearson D."/>
            <person name="Quail M.A."/>
            <person name="Rabbinowitsch E."/>
            <person name="Rutherford K.M."/>
            <person name="Rutter S."/>
            <person name="Saunders D."/>
            <person name="Seeger K."/>
            <person name="Sharp S."/>
            <person name="Skelton J."/>
            <person name="Simmonds M.N."/>
            <person name="Squares R."/>
            <person name="Squares S."/>
            <person name="Stevens K."/>
            <person name="Taylor K."/>
            <person name="Taylor R.G."/>
            <person name="Tivey A."/>
            <person name="Walsh S.V."/>
            <person name="Warren T."/>
            <person name="Whitehead S."/>
            <person name="Woodward J.R."/>
            <person name="Volckaert G."/>
            <person name="Aert R."/>
            <person name="Robben J."/>
            <person name="Grymonprez B."/>
            <person name="Weltjens I."/>
            <person name="Vanstreels E."/>
            <person name="Rieger M."/>
            <person name="Schaefer M."/>
            <person name="Mueller-Auer S."/>
            <person name="Gabel C."/>
            <person name="Fuchs M."/>
            <person name="Duesterhoeft A."/>
            <person name="Fritzc C."/>
            <person name="Holzer E."/>
            <person name="Moestl D."/>
            <person name="Hilbert H."/>
            <person name="Borzym K."/>
            <person name="Langer I."/>
            <person name="Beck A."/>
            <person name="Lehrach H."/>
            <person name="Reinhardt R."/>
            <person name="Pohl T.M."/>
            <person name="Eger P."/>
            <person name="Zimmermann W."/>
            <person name="Wedler H."/>
            <person name="Wambutt R."/>
            <person name="Purnelle B."/>
            <person name="Goffeau A."/>
            <person name="Cadieu E."/>
            <person name="Dreano S."/>
            <person name="Gloux S."/>
            <person name="Lelaure V."/>
            <person name="Mottier S."/>
            <person name="Galibert F."/>
            <person name="Aves S.J."/>
            <person name="Xiang Z."/>
            <person name="Hunt C."/>
            <person name="Moore K."/>
            <person name="Hurst S.M."/>
            <person name="Lucas M."/>
            <person name="Rochet M."/>
            <person name="Gaillardin C."/>
            <person name="Tallada V.A."/>
            <person name="Garzon A."/>
            <person name="Thode G."/>
            <person name="Daga R.R."/>
            <person name="Cruzado L."/>
            <person name="Jimenez J."/>
            <person name="Sanchez M."/>
            <person name="del Rey F."/>
            <person name="Benito J."/>
            <person name="Dominguez A."/>
            <person name="Revuelta J.L."/>
            <person name="Moreno S."/>
            <person name="Armstrong J."/>
            <person name="Forsburg S.L."/>
            <person name="Cerutti L."/>
            <person name="Lowe T."/>
            <person name="McCombie W.R."/>
            <person name="Paulsen I."/>
            <person name="Potashkin J."/>
            <person name="Shpakovski G.V."/>
            <person name="Ussery D."/>
            <person name="Barrell B.G."/>
            <person name="Nurse P."/>
        </authorList>
    </citation>
    <scope>NUCLEOTIDE SEQUENCE [LARGE SCALE GENOMIC DNA]</scope>
    <source>
        <strain>972 / ATCC 24843</strain>
    </source>
</reference>
<reference key="2">
    <citation type="journal article" date="1997" name="DNA Res.">
        <title>Identification of open reading frames in Schizosaccharomyces pombe cDNAs.</title>
        <authorList>
            <person name="Yoshioka S."/>
            <person name="Kato K."/>
            <person name="Nakai K."/>
            <person name="Okayama H."/>
            <person name="Nojima H."/>
        </authorList>
    </citation>
    <scope>NUCLEOTIDE SEQUENCE [LARGE SCALE MRNA] OF 9-438</scope>
    <source>
        <strain>PR745</strain>
    </source>
</reference>
<reference key="3">
    <citation type="journal article" date="2006" name="Nat. Biotechnol.">
        <title>ORFeome cloning and global analysis of protein localization in the fission yeast Schizosaccharomyces pombe.</title>
        <authorList>
            <person name="Matsuyama A."/>
            <person name="Arai R."/>
            <person name="Yashiroda Y."/>
            <person name="Shirai A."/>
            <person name="Kamata A."/>
            <person name="Sekido S."/>
            <person name="Kobayashi Y."/>
            <person name="Hashimoto A."/>
            <person name="Hamamoto M."/>
            <person name="Hiraoka Y."/>
            <person name="Horinouchi S."/>
            <person name="Yoshida M."/>
        </authorList>
    </citation>
    <scope>SUBCELLULAR LOCATION [LARGE SCALE ANALYSIS]</scope>
</reference>
<reference key="4">
    <citation type="journal article" date="2010" name="Mol. Cell. Proteomics">
        <title>A genetic engineering solution to the 'arginine conversion problem' in stable isotope labeling by amino acids in cell culture (SILAC).</title>
        <authorList>
            <person name="Bicho C.C."/>
            <person name="de Lima Alves F."/>
            <person name="Chen Z.A."/>
            <person name="Rappsilber J."/>
            <person name="Sawin K.E."/>
        </authorList>
    </citation>
    <scope>DISRUPTION PHENOTYPE</scope>
</reference>
<protein>
    <recommendedName>
        <fullName>Ornithine aminotransferase car2</fullName>
        <ecNumber>2.6.1.13</ecNumber>
    </recommendedName>
    <alternativeName>
        <fullName>Ornithine--oxo-acid aminotransferase</fullName>
    </alternativeName>
</protein>
<dbReference type="EC" id="2.6.1.13"/>
<dbReference type="EMBL" id="CU329671">
    <property type="protein sequence ID" value="CAB76044.1"/>
    <property type="molecule type" value="Genomic_DNA"/>
</dbReference>
<dbReference type="EMBL" id="D89154">
    <property type="protein sequence ID" value="BAA13816.1"/>
    <property type="molecule type" value="mRNA"/>
</dbReference>
<dbReference type="PIR" id="T42430">
    <property type="entry name" value="T42430"/>
</dbReference>
<dbReference type="PIR" id="T50352">
    <property type="entry name" value="T50352"/>
</dbReference>
<dbReference type="RefSeq" id="NP_596588.1">
    <property type="nucleotide sequence ID" value="NM_001022508.2"/>
</dbReference>
<dbReference type="SMR" id="Q9P7L5"/>
<dbReference type="BioGRID" id="277152">
    <property type="interactions" value="10"/>
</dbReference>
<dbReference type="FunCoup" id="Q9P7L5">
    <property type="interactions" value="461"/>
</dbReference>
<dbReference type="STRING" id="284812.Q9P7L5"/>
<dbReference type="iPTMnet" id="Q9P7L5"/>
<dbReference type="PaxDb" id="4896-SPBC21C3.08c.1"/>
<dbReference type="EnsemblFungi" id="SPBC21C3.08c.1">
    <property type="protein sequence ID" value="SPBC21C3.08c.1:pep"/>
    <property type="gene ID" value="SPBC21C3.08c"/>
</dbReference>
<dbReference type="GeneID" id="2540626"/>
<dbReference type="KEGG" id="spo:2540626"/>
<dbReference type="PomBase" id="SPBC21C3.08c">
    <property type="gene designation" value="car2"/>
</dbReference>
<dbReference type="VEuPathDB" id="FungiDB:SPBC21C3.08c"/>
<dbReference type="eggNOG" id="KOG1402">
    <property type="taxonomic scope" value="Eukaryota"/>
</dbReference>
<dbReference type="HOGENOM" id="CLU_016922_10_3_1"/>
<dbReference type="InParanoid" id="Q9P7L5"/>
<dbReference type="OMA" id="RSAWDLC"/>
<dbReference type="PhylomeDB" id="Q9P7L5"/>
<dbReference type="Reactome" id="R-SPO-8964539">
    <property type="pathway name" value="Glutamate and glutamine metabolism"/>
</dbReference>
<dbReference type="UniPathway" id="UPA00098">
    <property type="reaction ID" value="UER00358"/>
</dbReference>
<dbReference type="PRO" id="PR:Q9P7L5"/>
<dbReference type="Proteomes" id="UP000002485">
    <property type="component" value="Chromosome II"/>
</dbReference>
<dbReference type="GO" id="GO:0005737">
    <property type="term" value="C:cytoplasm"/>
    <property type="evidence" value="ECO:0000318"/>
    <property type="project" value="GO_Central"/>
</dbReference>
<dbReference type="GO" id="GO:0005829">
    <property type="term" value="C:cytosol"/>
    <property type="evidence" value="ECO:0007005"/>
    <property type="project" value="PomBase"/>
</dbReference>
<dbReference type="GO" id="GO:0005634">
    <property type="term" value="C:nucleus"/>
    <property type="evidence" value="ECO:0007005"/>
    <property type="project" value="PomBase"/>
</dbReference>
<dbReference type="GO" id="GO:0042802">
    <property type="term" value="F:identical protein binding"/>
    <property type="evidence" value="ECO:0000318"/>
    <property type="project" value="GO_Central"/>
</dbReference>
<dbReference type="GO" id="GO:0004587">
    <property type="term" value="F:ornithine aminotransferase activity"/>
    <property type="evidence" value="ECO:0000318"/>
    <property type="project" value="GO_Central"/>
</dbReference>
<dbReference type="GO" id="GO:0030170">
    <property type="term" value="F:pyridoxal phosphate binding"/>
    <property type="evidence" value="ECO:0000318"/>
    <property type="project" value="GO_Central"/>
</dbReference>
<dbReference type="GO" id="GO:0019544">
    <property type="term" value="P:arginine catabolic process to glutamate"/>
    <property type="evidence" value="ECO:0000318"/>
    <property type="project" value="GO_Central"/>
</dbReference>
<dbReference type="GO" id="GO:0010121">
    <property type="term" value="P:arginine catabolic process to proline via ornithine"/>
    <property type="evidence" value="ECO:0000315"/>
    <property type="project" value="PomBase"/>
</dbReference>
<dbReference type="GO" id="GO:0055129">
    <property type="term" value="P:L-proline biosynthetic process"/>
    <property type="evidence" value="ECO:0007669"/>
    <property type="project" value="UniProtKB-UniPathway"/>
</dbReference>
<dbReference type="CDD" id="cd00610">
    <property type="entry name" value="OAT_like"/>
    <property type="match status" value="1"/>
</dbReference>
<dbReference type="FunFam" id="3.40.640.10:FF:000011">
    <property type="entry name" value="Ornithine aminotransferase"/>
    <property type="match status" value="1"/>
</dbReference>
<dbReference type="FunFam" id="3.90.1150.10:FF:000152">
    <property type="entry name" value="Ornithine aminotransferase"/>
    <property type="match status" value="1"/>
</dbReference>
<dbReference type="Gene3D" id="3.90.1150.10">
    <property type="entry name" value="Aspartate Aminotransferase, domain 1"/>
    <property type="match status" value="1"/>
</dbReference>
<dbReference type="Gene3D" id="3.40.640.10">
    <property type="entry name" value="Type I PLP-dependent aspartate aminotransferase-like (Major domain)"/>
    <property type="match status" value="1"/>
</dbReference>
<dbReference type="InterPro" id="IPR005814">
    <property type="entry name" value="Aminotrans_3"/>
</dbReference>
<dbReference type="InterPro" id="IPR049704">
    <property type="entry name" value="Aminotrans_3_PPA_site"/>
</dbReference>
<dbReference type="InterPro" id="IPR050103">
    <property type="entry name" value="Class-III_PLP-dep_AT"/>
</dbReference>
<dbReference type="InterPro" id="IPR010164">
    <property type="entry name" value="Orn_aminotrans"/>
</dbReference>
<dbReference type="InterPro" id="IPR015424">
    <property type="entry name" value="PyrdxlP-dep_Trfase"/>
</dbReference>
<dbReference type="InterPro" id="IPR015421">
    <property type="entry name" value="PyrdxlP-dep_Trfase_major"/>
</dbReference>
<dbReference type="InterPro" id="IPR015422">
    <property type="entry name" value="PyrdxlP-dep_Trfase_small"/>
</dbReference>
<dbReference type="NCBIfam" id="TIGR01885">
    <property type="entry name" value="Orn_aminotrans"/>
    <property type="match status" value="1"/>
</dbReference>
<dbReference type="PANTHER" id="PTHR11986">
    <property type="entry name" value="AMINOTRANSFERASE CLASS III"/>
    <property type="match status" value="1"/>
</dbReference>
<dbReference type="PANTHER" id="PTHR11986:SF18">
    <property type="entry name" value="ORNITHINE AMINOTRANSFERASE, MITOCHONDRIAL"/>
    <property type="match status" value="1"/>
</dbReference>
<dbReference type="Pfam" id="PF00202">
    <property type="entry name" value="Aminotran_3"/>
    <property type="match status" value="1"/>
</dbReference>
<dbReference type="PIRSF" id="PIRSF000521">
    <property type="entry name" value="Transaminase_4ab_Lys_Orn"/>
    <property type="match status" value="1"/>
</dbReference>
<dbReference type="SUPFAM" id="SSF53383">
    <property type="entry name" value="PLP-dependent transferases"/>
    <property type="match status" value="1"/>
</dbReference>
<dbReference type="PROSITE" id="PS00600">
    <property type="entry name" value="AA_TRANSFER_CLASS_3"/>
    <property type="match status" value="1"/>
</dbReference>
<feature type="chain" id="PRO_0000120498" description="Ornithine aminotransferase car2">
    <location>
        <begin position="1"/>
        <end position="438"/>
    </location>
</feature>
<feature type="modified residue" description="N6-(pyridoxal phosphate)lysine" evidence="1">
    <location>
        <position position="275"/>
    </location>
</feature>
<feature type="sequence conflict" description="In Ref. 2; BAA13816." evidence="4" ref="2">
    <original>F</original>
    <variation>S</variation>
    <location>
        <position position="11"/>
    </location>
</feature>
<feature type="sequence conflict" description="In Ref. 2; BAA13816." evidence="4" ref="2">
    <original>S</original>
    <variation>A</variation>
    <location>
        <position position="56"/>
    </location>
</feature>
<feature type="sequence conflict" description="In Ref. 2; BAA13816." evidence="4" ref="2">
    <original>G</original>
    <variation>D</variation>
    <location>
        <position position="105"/>
    </location>
</feature>
<feature type="sequence conflict" description="In Ref. 2; BAA13816." evidence="4" ref="2">
    <original>A</original>
    <variation>T</variation>
    <location>
        <position position="118"/>
    </location>
</feature>
<feature type="sequence conflict" description="In Ref. 2; BAA13816." evidence="4" ref="2">
    <original>Y</original>
    <variation>N</variation>
    <location>
        <position position="131"/>
    </location>
</feature>
<accession>Q9P7L5</accession>
<accession>P78805</accession>
<sequence length="438" mass="48247">MSAESLLHNTFSTEQIEVLENEYAAHNYHPLPVCFSKAKGAKVWDPEGREYLDFLSAYSAVNQGHCHPKIIEALVEQAQRVTLSSRAFYNDKFGPFAKYITEYFGYEMVIPMNTGAEAVETACKLARLWGYKAKKIPTDEAIILSCVDNFHGRTMGIISMSTDPDARDNYGPYLPNVGPKISGADRVLRYNNIEDLKYYLDTFGPKVAAFLVEPIQGEAGVMVPDDGYLEEAYKLCKAHNVLFIADEVQTGVARTGKMLCIEHSNVKPDVVILGKAISGGVYPVSAVLSSREIMLNFEPGTHGSTYGGNPLGAAVSIAALEVVKEEKLTERAAVLGEKFRTALIECKSPIVQKVRGRGLLNAVVIDESKTNGRTAWDLCLIMRSRGVLAKPTHGNIIRFSPPLVITEEDLMKGIEVIKKSLNDLPTIDMTPYAEKPIH</sequence>
<organism>
    <name type="scientific">Schizosaccharomyces pombe (strain 972 / ATCC 24843)</name>
    <name type="common">Fission yeast</name>
    <dbReference type="NCBI Taxonomy" id="284812"/>
    <lineage>
        <taxon>Eukaryota</taxon>
        <taxon>Fungi</taxon>
        <taxon>Dikarya</taxon>
        <taxon>Ascomycota</taxon>
        <taxon>Taphrinomycotina</taxon>
        <taxon>Schizosaccharomycetes</taxon>
        <taxon>Schizosaccharomycetales</taxon>
        <taxon>Schizosaccharomycetaceae</taxon>
        <taxon>Schizosaccharomyces</taxon>
    </lineage>
</organism>
<proteinExistence type="evidence at transcript level"/>
<name>OAT_SCHPO</name>
<keyword id="KW-0032">Aminotransferase</keyword>
<keyword id="KW-0963">Cytoplasm</keyword>
<keyword id="KW-0539">Nucleus</keyword>
<keyword id="KW-0663">Pyridoxal phosphate</keyword>
<keyword id="KW-1185">Reference proteome</keyword>
<keyword id="KW-0808">Transferase</keyword>
<evidence type="ECO:0000250" key="1"/>
<evidence type="ECO:0000269" key="2">
    <source>
    </source>
</evidence>
<evidence type="ECO:0000269" key="3">
    <source>
    </source>
</evidence>
<evidence type="ECO:0000305" key="4"/>
<gene>
    <name type="primary">car2</name>
    <name type="ORF">SPBC21C3.08c</name>
</gene>
<comment type="catalytic activity">
    <reaction>
        <text>a 2-oxocarboxylate + L-ornithine = L-glutamate 5-semialdehyde + an L-alpha-amino acid</text>
        <dbReference type="Rhea" id="RHEA:13877"/>
        <dbReference type="ChEBI" id="CHEBI:35179"/>
        <dbReference type="ChEBI" id="CHEBI:46911"/>
        <dbReference type="ChEBI" id="CHEBI:58066"/>
        <dbReference type="ChEBI" id="CHEBI:59869"/>
        <dbReference type="EC" id="2.6.1.13"/>
    </reaction>
</comment>
<comment type="cofactor">
    <cofactor evidence="1">
        <name>pyridoxal 5'-phosphate</name>
        <dbReference type="ChEBI" id="CHEBI:597326"/>
    </cofactor>
</comment>
<comment type="pathway">
    <text>Amino-acid biosynthesis; L-proline biosynthesis; L-glutamate 5-semialdehyde from L-ornithine: step 1/1.</text>
</comment>
<comment type="subcellular location">
    <subcellularLocation>
        <location evidence="2">Cytoplasm</location>
    </subcellularLocation>
    <subcellularLocation>
        <location evidence="2">Nucleus</location>
    </subcellularLocation>
</comment>
<comment type="disruption phenotype">
    <text evidence="3">Prevents arginine conversion to other amino acids.</text>
</comment>
<comment type="similarity">
    <text evidence="4">Belongs to the class-III pyridoxal-phosphate-dependent aminotransferase family.</text>
</comment>